<name>ENLYS_BPDPK</name>
<accession>Q8SD18</accession>
<feature type="chain" id="PRO_0000461133" description="Endolysin gp144">
    <location>
        <begin position="1"/>
        <end position="260"/>
    </location>
</feature>
<feature type="region of interest" description="Peptidoglycan binding" evidence="2 3">
    <location>
        <begin position="9"/>
        <end position="69"/>
    </location>
</feature>
<feature type="region of interest" description="Peptidoglycan hydrolase activity" evidence="2">
    <location>
        <begin position="106"/>
        <end position="210"/>
    </location>
</feature>
<feature type="active site" evidence="3 5">
    <location>
        <position position="115"/>
    </location>
</feature>
<feature type="site" description="Important for the enzymatic reaction" evidence="5">
    <location>
        <position position="147"/>
    </location>
</feature>
<feature type="site" description="Important for the enzymatic reaction" evidence="5">
    <location>
        <position position="178"/>
    </location>
</feature>
<feature type="site" description="Important for the enzymatic reaction" evidence="5">
    <location>
        <position position="197"/>
    </location>
</feature>
<feature type="mutagenesis site" description="70% loss of enzymatic activity. Complete loss of activity; when associated with A-178." evidence="2 5">
    <original>E</original>
    <variation>A</variation>
    <location>
        <position position="115"/>
    </location>
</feature>
<feature type="mutagenesis site" description="37% loss of enzymatic activity. Complete loss of activity; when associated with A-115." evidence="5">
    <original>E</original>
    <variation>A</variation>
    <location>
        <position position="178"/>
    </location>
</feature>
<feature type="mutagenesis site" description="49% loss of enzymatic activity." evidence="5">
    <original>Y</original>
    <variation>F</variation>
    <location>
        <position position="197"/>
    </location>
</feature>
<feature type="helix" evidence="12">
    <location>
        <begin position="11"/>
        <end position="21"/>
    </location>
</feature>
<feature type="turn" evidence="12">
    <location>
        <begin position="22"/>
        <end position="24"/>
    </location>
</feature>
<feature type="helix" evidence="12">
    <location>
        <begin position="36"/>
        <end position="48"/>
    </location>
</feature>
<feature type="helix" evidence="12">
    <location>
        <begin position="59"/>
        <end position="68"/>
    </location>
</feature>
<feature type="helix" evidence="12">
    <location>
        <begin position="75"/>
        <end position="77"/>
    </location>
</feature>
<feature type="strand" evidence="12">
    <location>
        <begin position="82"/>
        <end position="85"/>
    </location>
</feature>
<feature type="helix" evidence="12">
    <location>
        <begin position="87"/>
        <end position="101"/>
    </location>
</feature>
<feature type="helix" evidence="12">
    <location>
        <begin position="105"/>
        <end position="116"/>
    </location>
</feature>
<feature type="turn" evidence="12">
    <location>
        <begin position="131"/>
        <end position="134"/>
    </location>
</feature>
<feature type="helix" evidence="12">
    <location>
        <begin position="137"/>
        <end position="147"/>
    </location>
</feature>
<feature type="helix" evidence="12">
    <location>
        <begin position="148"/>
        <end position="151"/>
    </location>
</feature>
<feature type="helix" evidence="12">
    <location>
        <begin position="160"/>
        <end position="163"/>
    </location>
</feature>
<feature type="helix" evidence="12">
    <location>
        <begin position="165"/>
        <end position="183"/>
    </location>
</feature>
<feature type="helix" evidence="12">
    <location>
        <begin position="184"/>
        <end position="186"/>
    </location>
</feature>
<feature type="strand" evidence="13">
    <location>
        <begin position="187"/>
        <end position="189"/>
    </location>
</feature>
<feature type="helix" evidence="12">
    <location>
        <begin position="193"/>
        <end position="202"/>
    </location>
</feature>
<feature type="helix" evidence="12">
    <location>
        <begin position="204"/>
        <end position="210"/>
    </location>
</feature>
<feature type="helix" evidence="12">
    <location>
        <begin position="219"/>
        <end position="222"/>
    </location>
</feature>
<feature type="helix" evidence="12">
    <location>
        <begin position="224"/>
        <end position="229"/>
    </location>
</feature>
<feature type="helix" evidence="12">
    <location>
        <begin position="231"/>
        <end position="234"/>
    </location>
</feature>
<feature type="helix" evidence="12">
    <location>
        <begin position="244"/>
        <end position="256"/>
    </location>
</feature>
<gene>
    <name type="primary">PHIKZ144</name>
</gene>
<protein>
    <recommendedName>
        <fullName evidence="6">Endolysin gp144</fullName>
        <ecNumber evidence="1 5">4.2.2.n1</ecNumber>
    </recommendedName>
    <alternativeName>
        <fullName evidence="7">Lysis protein</fullName>
    </alternativeName>
</protein>
<keyword id="KW-0002">3D-structure</keyword>
<keyword id="KW-0929">Antimicrobial</keyword>
<keyword id="KW-0081">Bacteriolytic enzyme</keyword>
<keyword id="KW-0204">Cytolysis</keyword>
<keyword id="KW-0578">Host cell lysis by virus</keyword>
<keyword id="KW-0456">Lyase</keyword>
<keyword id="KW-1185">Reference proteome</keyword>
<keyword id="KW-1188">Viral release from host cell</keyword>
<evidence type="ECO:0000269" key="1">
    <source>
    </source>
</evidence>
<evidence type="ECO:0000269" key="2">
    <source>
    </source>
</evidence>
<evidence type="ECO:0000269" key="3">
    <source>
    </source>
</evidence>
<evidence type="ECO:0000269" key="4">
    <source>
    </source>
</evidence>
<evidence type="ECO:0000269" key="5">
    <source>
    </source>
</evidence>
<evidence type="ECO:0000303" key="6">
    <source>
    </source>
</evidence>
<evidence type="ECO:0000305" key="7"/>
<evidence type="ECO:0000305" key="8">
    <source>
    </source>
</evidence>
<evidence type="ECO:0000305" key="9">
    <source>
    </source>
</evidence>
<evidence type="ECO:0007744" key="10">
    <source>
        <dbReference type="PDB" id="3BKH"/>
    </source>
</evidence>
<evidence type="ECO:0007744" key="11">
    <source>
        <dbReference type="PDB" id="3BKV"/>
    </source>
</evidence>
<evidence type="ECO:0007829" key="12">
    <source>
        <dbReference type="PDB" id="3BKH"/>
    </source>
</evidence>
<evidence type="ECO:0007829" key="13">
    <source>
        <dbReference type="PDB" id="3BKV"/>
    </source>
</evidence>
<proteinExistence type="evidence at protein level"/>
<comment type="function">
    <text evidence="1 2 4 8 9">Endolysin with transglycosylase activity that degrades host peptidoglycans and participates in the sequential events which lead to the programmed host cell lysis releasing the mature viral particles (Probable). Binds and cleaves peptidoglycans found in Gram-negative bacteria and that contain the A1 chemotype peptidoglycan and fully N-acetylated glucosamine (PubMed:17233731, PubMed:17697255, PubMed:19348786).</text>
</comment>
<comment type="catalytic activity">
    <reaction evidence="1 5">
        <text>Exolytic cleavage of the (1-&gt;4)-beta-glycosidic linkage between N-acetylmuramic acid (MurNAc) and N-acetylglucosamine (GlcNAc) residues in peptidoglycan, from either the reducing or the non-reducing ends of the peptidoglycan chains, with concomitant formation of a 1,6-anhydrobond in the MurNAc residue.</text>
        <dbReference type="EC" id="4.2.2.n1"/>
    </reaction>
</comment>
<comment type="biophysicochemical properties">
    <phDependence>
        <text evidence="2">Optimum pH is 6.2.</text>
    </phDependence>
</comment>
<comment type="domain">
    <text evidence="2 3 4">The N-terminus is responsible for primary binding to the peptidoglycan (PubMed:17697255, PubMed:19348786). The C-terminus contains the peptidoglycan hydrolase activity (PubMed:18160394, PubMed:19348786).</text>
</comment>
<comment type="similarity">
    <text evidence="7">Belongs to the glycosyl hydrolase 23 family.</text>
</comment>
<organism>
    <name type="scientific">Pseudomonas phage phiKZ</name>
    <dbReference type="NCBI Taxonomy" id="2905945"/>
    <lineage>
        <taxon>Viruses</taxon>
        <taxon>Duplodnaviria</taxon>
        <taxon>Heunggongvirae</taxon>
        <taxon>Uroviricota</taxon>
        <taxon>Caudoviricetes</taxon>
        <taxon>Phikzvirus</taxon>
        <taxon>Phikzvirus phiKZ</taxon>
    </lineage>
</organism>
<reference key="1">
    <citation type="journal article" date="2002" name="J. Mol. Biol.">
        <title>The genome of bacteriophage phiKZ of Pseudomonas aeruginosa.</title>
        <authorList>
            <person name="Mesyanzhinov V.V."/>
            <person name="Robben J."/>
            <person name="Grymonprez B."/>
            <person name="Kostyuchenko V.A."/>
            <person name="Bourkaltseva M.V."/>
            <person name="Sykilinda N.N."/>
            <person name="Krylov V.N."/>
            <person name="Volckaert G."/>
        </authorList>
    </citation>
    <scope>NUCLEOTIDE SEQUENCE [GENOMIC DNA]</scope>
</reference>
<reference key="2">
    <citation type="journal article" date="2007" name="FEMS Microbiol. Lett.">
        <title>Peptidoglycan lytic activity of the Pseudomonas aeruginosa phage phiKZ gp144 lytic transglycosylase.</title>
        <authorList>
            <person name="Paradis-Bleau C."/>
            <person name="Cloutier I."/>
            <person name="Lemieux L."/>
            <person name="Sanschagrin F."/>
            <person name="Laroche J."/>
            <person name="Auger M."/>
            <person name="Garnier A."/>
            <person name="Levesque R.C."/>
        </authorList>
    </citation>
    <scope>CATALYTIC ACTIVITY</scope>
    <scope>FUNCTION</scope>
</reference>
<reference key="3">
    <citation type="journal article" date="2007" name="Mol. Microbiol.">
        <title>Muralytic activity and modular structure of the endolysins of Pseudomonas aeruginosa bacteriophages phiKZ and EL.</title>
        <authorList>
            <person name="Briers Y."/>
            <person name="Volckaert G."/>
            <person name="Cornelissen A."/>
            <person name="Lagaert S."/>
            <person name="Michiels C.W."/>
            <person name="Hertveldt K."/>
            <person name="Lavigne R."/>
        </authorList>
    </citation>
    <scope>CATALYTIC ACTIVITY</scope>
    <scope>BIOPHYSICOCHEMICAL PROPERTIES</scope>
    <scope>FUNCTION</scope>
    <scope>ACTIVE SITE</scope>
    <scope>DOMAIN</scope>
    <scope>MUTAGENESIS OF GLU-115</scope>
</reference>
<reference key="4">
    <citation type="journal article" date="2009" name="Biochem. Biophys. Res. Commun.">
        <title>The high-affinity peptidoglycan binding domain of Pseudomonas phage endolysin KZ144.</title>
        <authorList>
            <person name="Briers Y."/>
            <person name="Schmelcher M."/>
            <person name="Loessner M.J."/>
            <person name="Hendrix J."/>
            <person name="Engelborghs Y."/>
            <person name="Volckaert G."/>
            <person name="Lavigne R."/>
        </authorList>
    </citation>
    <scope>DOMAIN</scope>
    <scope>FUNCTION</scope>
</reference>
<reference key="5">
    <citation type="journal article" date="2017" name="Acta Naturae">
        <title>Dual Active Site in the Endolytic Transglycosylase gp144 of Bacteriophage phiKZ.</title>
        <authorList>
            <person name="Chertkov O.V."/>
            <person name="Armeev G.A."/>
            <person name="Uporov I.V."/>
            <person name="Legotsky S.A."/>
            <person name="Sykilinda N.N."/>
            <person name="Shaytan A.K."/>
            <person name="Klyachko N.L."/>
            <person name="Miroshnikov K.A."/>
        </authorList>
    </citation>
    <scope>ACTIVE SITE</scope>
    <scope>MUTAGENESIS OF GLU-115; GLU-178 AND TYR-197</scope>
    <scope>CATALYTIC ACTIVITY</scope>
</reference>
<reference evidence="10 11" key="6">
    <citation type="journal article" date="2008" name="J. Biol. Chem.">
        <title>Structure of the bacteriophage phi KZ lytic transglycosylase gp144.</title>
        <authorList>
            <person name="Fokine A."/>
            <person name="Miroshnikov K.A."/>
            <person name="Shneider M.M."/>
            <person name="Mesyanzhinov V.V."/>
            <person name="Rossmann M.G."/>
        </authorList>
    </citation>
    <scope>X-RAY CRYSTALLOGRAPHY (2.50 ANGSTROMS) IN COMPLEX WITH N-ACETYL-D-GLUCOSAMINE</scope>
    <scope>DOMAIN</scope>
    <scope>FUNCTION</scope>
    <scope>ACTIVE SITE</scope>
</reference>
<organismHost>
    <name type="scientific">Pseudomonas aeruginosa</name>
    <dbReference type="NCBI Taxonomy" id="287"/>
</organismHost>
<dbReference type="EC" id="4.2.2.n1" evidence="1 5"/>
<dbReference type="EMBL" id="AF399011">
    <property type="protein sequence ID" value="AAL83045.1"/>
    <property type="molecule type" value="Genomic_DNA"/>
</dbReference>
<dbReference type="RefSeq" id="NP_803710.1">
    <property type="nucleotide sequence ID" value="NC_004629.1"/>
</dbReference>
<dbReference type="PDB" id="3BKH">
    <property type="method" value="X-ray"/>
    <property type="resolution" value="2.50 A"/>
    <property type="chains" value="A=1-260"/>
</dbReference>
<dbReference type="PDB" id="3BKV">
    <property type="method" value="X-ray"/>
    <property type="resolution" value="2.60 A"/>
    <property type="chains" value="A=1-260"/>
</dbReference>
<dbReference type="PDBsum" id="3BKH"/>
<dbReference type="PDBsum" id="3BKV"/>
<dbReference type="SMR" id="Q8SD18"/>
<dbReference type="CAZy" id="GH23">
    <property type="family name" value="Glycoside Hydrolase Family 23"/>
</dbReference>
<dbReference type="GeneID" id="1258427"/>
<dbReference type="KEGG" id="vg:1258427"/>
<dbReference type="BRENDA" id="3.2.1.17">
    <property type="organism ID" value="9763"/>
</dbReference>
<dbReference type="EvolutionaryTrace" id="Q8SD18"/>
<dbReference type="Proteomes" id="UP000002098">
    <property type="component" value="Genome"/>
</dbReference>
<dbReference type="GO" id="GO:0008933">
    <property type="term" value="F:peptidoglycan lytic transglycosylase activity"/>
    <property type="evidence" value="ECO:0000314"/>
    <property type="project" value="CACAO"/>
</dbReference>
<dbReference type="GO" id="GO:0042742">
    <property type="term" value="P:defense response to bacterium"/>
    <property type="evidence" value="ECO:0007669"/>
    <property type="project" value="UniProtKB-KW"/>
</dbReference>
<dbReference type="GO" id="GO:0044659">
    <property type="term" value="P:viral release from host cell by cytolysis"/>
    <property type="evidence" value="ECO:0000314"/>
    <property type="project" value="CACAO"/>
</dbReference>
<dbReference type="FunFam" id="1.10.101.10:FF:000016">
    <property type="entry name" value="N-acetylmuramoyl-L-alanine amidase"/>
    <property type="match status" value="1"/>
</dbReference>
<dbReference type="FunFam" id="1.10.530.10:FF:000045">
    <property type="entry name" value="Peptidoglycan hydrolase gp181"/>
    <property type="match status" value="1"/>
</dbReference>
<dbReference type="Gene3D" id="1.10.530.10">
    <property type="match status" value="1"/>
</dbReference>
<dbReference type="Gene3D" id="1.10.101.10">
    <property type="entry name" value="PGBD-like superfamily/PGBD"/>
    <property type="match status" value="1"/>
</dbReference>
<dbReference type="InterPro" id="IPR023346">
    <property type="entry name" value="Lysozyme-like_dom_sf"/>
</dbReference>
<dbReference type="InterPro" id="IPR002477">
    <property type="entry name" value="Peptidoglycan-bd-like"/>
</dbReference>
<dbReference type="InterPro" id="IPR036365">
    <property type="entry name" value="PGBD-like_sf"/>
</dbReference>
<dbReference type="InterPro" id="IPR036366">
    <property type="entry name" value="PGBDSf"/>
</dbReference>
<dbReference type="InterPro" id="IPR008258">
    <property type="entry name" value="Transglycosylase_SLT_dom_1"/>
</dbReference>
<dbReference type="Pfam" id="PF01471">
    <property type="entry name" value="PG_binding_1"/>
    <property type="match status" value="1"/>
</dbReference>
<dbReference type="Pfam" id="PF01464">
    <property type="entry name" value="SLT"/>
    <property type="match status" value="1"/>
</dbReference>
<dbReference type="SUPFAM" id="SSF53955">
    <property type="entry name" value="Lysozyme-like"/>
    <property type="match status" value="1"/>
</dbReference>
<dbReference type="SUPFAM" id="SSF47090">
    <property type="entry name" value="PGBD-like"/>
    <property type="match status" value="1"/>
</dbReference>
<sequence length="260" mass="28815">MKVLRKGDRGDEVCQLQTLLNLCGYDVGKPDGIFGNNTFNQVVKFQKDNCLDSDGIVGKNTWAELFSKYSPPIPYKTIPMPTANKSRAAATPVMNAVENATGVRSQLLLTFASIESAFDYEIKAKTSSATGWFQFLTGTWKTMIENYGMKYGVLTDPTGALRKDPRISALMGAELIKENMNILRPVLKREPTDTDLYLAHFFGPGAARRFLTTGQNELAATHFPKEAQANPSIFYNKDGSPKTIQEVYNLMDGKVAAHRK</sequence>